<protein>
    <recommendedName>
        <fullName evidence="3">Inositol polyphosphate multikinase IPK2</fullName>
        <shortName evidence="3">OsIPK2</shortName>
        <ecNumber evidence="3">2.7.1.140</ecNumber>
        <ecNumber evidence="3">2.7.1.151</ecNumber>
    </recommendedName>
    <alternativeName>
        <fullName>Inositol polyphosphate 6-/3-/5-kinase</fullName>
    </alternativeName>
</protein>
<gene>
    <name evidence="3" type="primary">IPK2</name>
    <name evidence="4" type="ORF">OsI_07455</name>
</gene>
<reference key="1">
    <citation type="submission" date="2006-01" db="EMBL/GenBank/DDBJ databases">
        <title>Isolation and identification of inositol polyphosphate kinase gene from Oryza sativa.</title>
        <authorList>
            <person name="Chen X.-F."/>
            <person name="Zhou T."/>
            <person name="Meng Z."/>
            <person name="Yang Z.-N."/>
            <person name="Xia H.-J."/>
        </authorList>
    </citation>
    <scope>NUCLEOTIDE SEQUENCE [MRNA]</scope>
    <source>
        <strain>cv. 93-11</strain>
    </source>
</reference>
<reference key="2">
    <citation type="journal article" date="2005" name="PLoS Biol.">
        <title>The genomes of Oryza sativa: a history of duplications.</title>
        <authorList>
            <person name="Yu J."/>
            <person name="Wang J."/>
            <person name="Lin W."/>
            <person name="Li S."/>
            <person name="Li H."/>
            <person name="Zhou J."/>
            <person name="Ni P."/>
            <person name="Dong W."/>
            <person name="Hu S."/>
            <person name="Zeng C."/>
            <person name="Zhang J."/>
            <person name="Zhang Y."/>
            <person name="Li R."/>
            <person name="Xu Z."/>
            <person name="Li S."/>
            <person name="Li X."/>
            <person name="Zheng H."/>
            <person name="Cong L."/>
            <person name="Lin L."/>
            <person name="Yin J."/>
            <person name="Geng J."/>
            <person name="Li G."/>
            <person name="Shi J."/>
            <person name="Liu J."/>
            <person name="Lv H."/>
            <person name="Li J."/>
            <person name="Wang J."/>
            <person name="Deng Y."/>
            <person name="Ran L."/>
            <person name="Shi X."/>
            <person name="Wang X."/>
            <person name="Wu Q."/>
            <person name="Li C."/>
            <person name="Ren X."/>
            <person name="Wang J."/>
            <person name="Wang X."/>
            <person name="Li D."/>
            <person name="Liu D."/>
            <person name="Zhang X."/>
            <person name="Ji Z."/>
            <person name="Zhao W."/>
            <person name="Sun Y."/>
            <person name="Zhang Z."/>
            <person name="Bao J."/>
            <person name="Han Y."/>
            <person name="Dong L."/>
            <person name="Ji J."/>
            <person name="Chen P."/>
            <person name="Wu S."/>
            <person name="Liu J."/>
            <person name="Xiao Y."/>
            <person name="Bu D."/>
            <person name="Tan J."/>
            <person name="Yang L."/>
            <person name="Ye C."/>
            <person name="Zhang J."/>
            <person name="Xu J."/>
            <person name="Zhou Y."/>
            <person name="Yu Y."/>
            <person name="Zhang B."/>
            <person name="Zhuang S."/>
            <person name="Wei H."/>
            <person name="Liu B."/>
            <person name="Lei M."/>
            <person name="Yu H."/>
            <person name="Li Y."/>
            <person name="Xu H."/>
            <person name="Wei S."/>
            <person name="He X."/>
            <person name="Fang L."/>
            <person name="Zhang Z."/>
            <person name="Zhang Y."/>
            <person name="Huang X."/>
            <person name="Su Z."/>
            <person name="Tong W."/>
            <person name="Li J."/>
            <person name="Tong Z."/>
            <person name="Li S."/>
            <person name="Ye J."/>
            <person name="Wang L."/>
            <person name="Fang L."/>
            <person name="Lei T."/>
            <person name="Chen C.-S."/>
            <person name="Chen H.-C."/>
            <person name="Xu Z."/>
            <person name="Li H."/>
            <person name="Huang H."/>
            <person name="Zhang F."/>
            <person name="Xu H."/>
            <person name="Li N."/>
            <person name="Zhao C."/>
            <person name="Li S."/>
            <person name="Dong L."/>
            <person name="Huang Y."/>
            <person name="Li L."/>
            <person name="Xi Y."/>
            <person name="Qi Q."/>
            <person name="Li W."/>
            <person name="Zhang B."/>
            <person name="Hu W."/>
            <person name="Zhang Y."/>
            <person name="Tian X."/>
            <person name="Jiao Y."/>
            <person name="Liang X."/>
            <person name="Jin J."/>
            <person name="Gao L."/>
            <person name="Zheng W."/>
            <person name="Hao B."/>
            <person name="Liu S.-M."/>
            <person name="Wang W."/>
            <person name="Yuan L."/>
            <person name="Cao M."/>
            <person name="McDermott J."/>
            <person name="Samudrala R."/>
            <person name="Wang J."/>
            <person name="Wong G.K.-S."/>
            <person name="Yang H."/>
        </authorList>
    </citation>
    <scope>NUCLEOTIDE SEQUENCE [LARGE SCALE GENOMIC DNA]</scope>
    <source>
        <strain>cv. 93-11</strain>
    </source>
</reference>
<name>IPK2_ORYSI</name>
<keyword id="KW-0067">ATP-binding</keyword>
<keyword id="KW-0418">Kinase</keyword>
<keyword id="KW-0547">Nucleotide-binding</keyword>
<keyword id="KW-1185">Reference proteome</keyword>
<keyword id="KW-0808">Transferase</keyword>
<comment type="function">
    <text evidence="1">Inositol phosphate kinase with a broad substrate specificity. Phosphorylates inositol 1,4,5-trisphosphate (Ins(1,4,5)P3), inositol 1,4,5,6-tetrakisphosphate (Ins(1,4,5,6)P4), inositol 1,3,4,5-tetrakisphosphate (Ins(1,3,4,5)P4), inositol 1,3,4,6-tetrakisphosphate (Ins(1,3,4,6)P4) and inositol 1,2,3,4,6-pentakisphosphate (Ins(1,2,3,4,6)P5) but not inositol 1,4-bisphosphate (Ins(1,4)P2), inositol 1,3,4-trisphosphate (Ins(1,3,4)P3), inositol 1,2,6-trisphosphate (Ins(1,2,6)P3), inositol 3,4,5,6-tetrakisphosphate (Ins(3,4,5,6)P4), inositol 1,3,4,5,6-pentakisphosphate (Ins(1,3,4,5,6)P5), inositol 1,2,4,5,6-pentakisphosphate (Ins(1,2,4,5,6)P5) or inositol hexakisphosphate (InsP6). Regulates pollen and root development probably through the regulation of InsP3-mediated calcium accumulation.</text>
</comment>
<comment type="catalytic activity">
    <reaction evidence="1">
        <text>1D-myo-inositol 1,4,5-trisphosphate + 2 ATP = 1D-myo-inositol 1,3,4,5,6-pentakisphosphate + 2 ADP + 2 H(+)</text>
        <dbReference type="Rhea" id="RHEA:32359"/>
        <dbReference type="ChEBI" id="CHEBI:15378"/>
        <dbReference type="ChEBI" id="CHEBI:30616"/>
        <dbReference type="ChEBI" id="CHEBI:57733"/>
        <dbReference type="ChEBI" id="CHEBI:203600"/>
        <dbReference type="ChEBI" id="CHEBI:456216"/>
        <dbReference type="EC" id="2.7.1.151"/>
    </reaction>
</comment>
<comment type="catalytic activity">
    <reaction evidence="1">
        <text>1D-myo-inositol 1,3,4,6-tetrakisphosphate + ATP = 1D-myo-inositol 1,3,4,5,6-pentakisphosphate + ADP + H(+)</text>
        <dbReference type="Rhea" id="RHEA:12717"/>
        <dbReference type="ChEBI" id="CHEBI:15378"/>
        <dbReference type="ChEBI" id="CHEBI:30616"/>
        <dbReference type="ChEBI" id="CHEBI:57660"/>
        <dbReference type="ChEBI" id="CHEBI:57733"/>
        <dbReference type="ChEBI" id="CHEBI:456216"/>
        <dbReference type="EC" id="2.7.1.140"/>
    </reaction>
</comment>
<comment type="similarity">
    <text evidence="3">Belongs to the inositol phosphokinase (IPK) family.</text>
</comment>
<feature type="chain" id="PRO_0000431884" description="Inositol polyphosphate multikinase IPK2">
    <location>
        <begin position="1"/>
        <end position="295"/>
    </location>
</feature>
<feature type="region of interest" description="Disordered" evidence="2">
    <location>
        <begin position="1"/>
        <end position="21"/>
    </location>
</feature>
<accession>A2X5H5</accession>
<organism>
    <name type="scientific">Oryza sativa subsp. indica</name>
    <name type="common">Rice</name>
    <dbReference type="NCBI Taxonomy" id="39946"/>
    <lineage>
        <taxon>Eukaryota</taxon>
        <taxon>Viridiplantae</taxon>
        <taxon>Streptophyta</taxon>
        <taxon>Embryophyta</taxon>
        <taxon>Tracheophyta</taxon>
        <taxon>Spermatophyta</taxon>
        <taxon>Magnoliopsida</taxon>
        <taxon>Liliopsida</taxon>
        <taxon>Poales</taxon>
        <taxon>Poaceae</taxon>
        <taxon>BOP clade</taxon>
        <taxon>Oryzoideae</taxon>
        <taxon>Oryzeae</taxon>
        <taxon>Oryzinae</taxon>
        <taxon>Oryza</taxon>
        <taxon>Oryza sativa</taxon>
    </lineage>
</organism>
<proteinExistence type="evidence at transcript level"/>
<evidence type="ECO:0000250" key="1">
    <source>
        <dbReference type="UniProtKB" id="Q9LY23"/>
    </source>
</evidence>
<evidence type="ECO:0000256" key="2">
    <source>
        <dbReference type="SAM" id="MobiDB-lite"/>
    </source>
</evidence>
<evidence type="ECO:0000305" key="3"/>
<evidence type="ECO:0000312" key="4">
    <source>
        <dbReference type="EMBL" id="EAY86085.1"/>
    </source>
</evidence>
<sequence length="295" mass="31029">MASDLRPPEHQVAGHRASADKLGPLVDGEGLFYKPLQAGERGEHEAAFYAAFTAHPAVPPRVRGAFFPRFHGTRFLPAPASPGGAPYPHIVLDDLLAGLPSPCVADVKIGACTWPPRSPDPYVAKCLAKDRETTSALLGFRVSGVRVVDARGGAVWRPDRSELKGIDAAGVRRVLRRYVSTGGGDGLDCALAAAVYGGEGGVLAQLRELKAWFEEQTLYHFYSASILFGYDANAAAAAAPGGGSGGVRVKLVDFAHVDDGDGVIDHNFLGGLCSLIKFIGDIVAEVTEKASSDHS</sequence>
<dbReference type="EC" id="2.7.1.140" evidence="3"/>
<dbReference type="EC" id="2.7.1.151" evidence="3"/>
<dbReference type="EMBL" id="AY627300">
    <property type="protein sequence ID" value="AAV64028.2"/>
    <property type="molecule type" value="mRNA"/>
</dbReference>
<dbReference type="EMBL" id="CM000127">
    <property type="protein sequence ID" value="EAY86085.1"/>
    <property type="molecule type" value="Genomic_DNA"/>
</dbReference>
<dbReference type="SMR" id="A2X5H5"/>
<dbReference type="STRING" id="39946.A2X5H5"/>
<dbReference type="EnsemblPlants" id="BGIOSGA008331-TA">
    <property type="protein sequence ID" value="BGIOSGA008331-PA"/>
    <property type="gene ID" value="BGIOSGA008331"/>
</dbReference>
<dbReference type="EnsemblPlants" id="OsGoSa_02g0019540.01">
    <property type="protein sequence ID" value="OsGoSa_02g0019540.01"/>
    <property type="gene ID" value="OsGoSa_02g0019540"/>
</dbReference>
<dbReference type="EnsemblPlants" id="OsIR64_02g0018870.01">
    <property type="protein sequence ID" value="OsIR64_02g0018870.01"/>
    <property type="gene ID" value="OsIR64_02g0018870"/>
</dbReference>
<dbReference type="EnsemblPlants" id="OsLiXu_02g0019260.01">
    <property type="protein sequence ID" value="OsLiXu_02g0019260.01"/>
    <property type="gene ID" value="OsLiXu_02g0019260"/>
</dbReference>
<dbReference type="Gramene" id="BGIOSGA008331-TA">
    <property type="protein sequence ID" value="BGIOSGA008331-PA"/>
    <property type="gene ID" value="BGIOSGA008331"/>
</dbReference>
<dbReference type="Gramene" id="OsGoSa_02g0019540.01">
    <property type="protein sequence ID" value="OsGoSa_02g0019540.01"/>
    <property type="gene ID" value="OsGoSa_02g0019540"/>
</dbReference>
<dbReference type="Gramene" id="OsIR64_02g0018870.01">
    <property type="protein sequence ID" value="OsIR64_02g0018870.01"/>
    <property type="gene ID" value="OsIR64_02g0018870"/>
</dbReference>
<dbReference type="Gramene" id="OsLiXu_02g0019260.01">
    <property type="protein sequence ID" value="OsLiXu_02g0019260.01"/>
    <property type="gene ID" value="OsLiXu_02g0019260"/>
</dbReference>
<dbReference type="HOGENOM" id="CLU_042569_1_2_1"/>
<dbReference type="OMA" id="DCAFAAT"/>
<dbReference type="OrthoDB" id="5958943at2759"/>
<dbReference type="Proteomes" id="UP000007015">
    <property type="component" value="Chromosome 2"/>
</dbReference>
<dbReference type="GO" id="GO:0005737">
    <property type="term" value="C:cytoplasm"/>
    <property type="evidence" value="ECO:0007669"/>
    <property type="project" value="TreeGrafter"/>
</dbReference>
<dbReference type="GO" id="GO:0005634">
    <property type="term" value="C:nucleus"/>
    <property type="evidence" value="ECO:0007669"/>
    <property type="project" value="TreeGrafter"/>
</dbReference>
<dbReference type="GO" id="GO:0005524">
    <property type="term" value="F:ATP binding"/>
    <property type="evidence" value="ECO:0007669"/>
    <property type="project" value="UniProtKB-KW"/>
</dbReference>
<dbReference type="GO" id="GO:0047326">
    <property type="term" value="F:inositol-1,3,4,6-tetrakisphosphate 5-kinase activity"/>
    <property type="evidence" value="ECO:0007669"/>
    <property type="project" value="RHEA"/>
</dbReference>
<dbReference type="GO" id="GO:0008440">
    <property type="term" value="F:inositol-1,4,5-trisphosphate 3-kinase activity"/>
    <property type="evidence" value="ECO:0007669"/>
    <property type="project" value="TreeGrafter"/>
</dbReference>
<dbReference type="GO" id="GO:0032958">
    <property type="term" value="P:inositol phosphate biosynthetic process"/>
    <property type="evidence" value="ECO:0007669"/>
    <property type="project" value="InterPro"/>
</dbReference>
<dbReference type="Gene3D" id="3.30.470.160">
    <property type="entry name" value="Inositol polyphosphate kinase"/>
    <property type="match status" value="1"/>
</dbReference>
<dbReference type="InterPro" id="IPR005522">
    <property type="entry name" value="IPK"/>
</dbReference>
<dbReference type="InterPro" id="IPR038286">
    <property type="entry name" value="IPK_sf"/>
</dbReference>
<dbReference type="PANTHER" id="PTHR12400">
    <property type="entry name" value="INOSITOL POLYPHOSPHATE KINASE"/>
    <property type="match status" value="1"/>
</dbReference>
<dbReference type="PANTHER" id="PTHR12400:SF51">
    <property type="entry name" value="INOSITOL POLYPHOSPHATE MULTIKINASE"/>
    <property type="match status" value="1"/>
</dbReference>
<dbReference type="Pfam" id="PF03770">
    <property type="entry name" value="IPK"/>
    <property type="match status" value="1"/>
</dbReference>
<dbReference type="SUPFAM" id="SSF56104">
    <property type="entry name" value="SAICAR synthase-like"/>
    <property type="match status" value="1"/>
</dbReference>